<name>LEPA_HAEI8</name>
<proteinExistence type="inferred from homology"/>
<reference key="1">
    <citation type="journal article" date="2005" name="J. Bacteriol.">
        <title>Genomic sequence of an otitis media isolate of nontypeable Haemophilus influenzae: comparative study with H. influenzae serotype d, strain KW20.</title>
        <authorList>
            <person name="Harrison A."/>
            <person name="Dyer D.W."/>
            <person name="Gillaspy A."/>
            <person name="Ray W.C."/>
            <person name="Mungur R."/>
            <person name="Carson M.B."/>
            <person name="Zhong H."/>
            <person name="Gipson J."/>
            <person name="Gipson M."/>
            <person name="Johnson L.S."/>
            <person name="Lewis L."/>
            <person name="Bakaletz L.O."/>
            <person name="Munson R.S. Jr."/>
        </authorList>
    </citation>
    <scope>NUCLEOTIDE SEQUENCE [LARGE SCALE GENOMIC DNA]</scope>
    <source>
        <strain>86-028NP</strain>
    </source>
</reference>
<keyword id="KW-0997">Cell inner membrane</keyword>
<keyword id="KW-1003">Cell membrane</keyword>
<keyword id="KW-0342">GTP-binding</keyword>
<keyword id="KW-0378">Hydrolase</keyword>
<keyword id="KW-0472">Membrane</keyword>
<keyword id="KW-0547">Nucleotide-binding</keyword>
<keyword id="KW-0648">Protein biosynthesis</keyword>
<protein>
    <recommendedName>
        <fullName evidence="1">Elongation factor 4</fullName>
        <shortName evidence="1">EF-4</shortName>
        <ecNumber evidence="1">3.6.5.n1</ecNumber>
    </recommendedName>
    <alternativeName>
        <fullName evidence="1">Ribosomal back-translocase LepA</fullName>
    </alternativeName>
</protein>
<feature type="chain" id="PRO_0000224765" description="Elongation factor 4">
    <location>
        <begin position="1"/>
        <end position="598"/>
    </location>
</feature>
<feature type="domain" description="tr-type G">
    <location>
        <begin position="2"/>
        <end position="184"/>
    </location>
</feature>
<feature type="binding site" evidence="1">
    <location>
        <begin position="14"/>
        <end position="19"/>
    </location>
    <ligand>
        <name>GTP</name>
        <dbReference type="ChEBI" id="CHEBI:37565"/>
    </ligand>
</feature>
<feature type="binding site" evidence="1">
    <location>
        <begin position="131"/>
        <end position="134"/>
    </location>
    <ligand>
        <name>GTP</name>
        <dbReference type="ChEBI" id="CHEBI:37565"/>
    </ligand>
</feature>
<evidence type="ECO:0000255" key="1">
    <source>
        <dbReference type="HAMAP-Rule" id="MF_00071"/>
    </source>
</evidence>
<comment type="function">
    <text evidence="1">Required for accurate and efficient protein synthesis under certain stress conditions. May act as a fidelity factor of the translation reaction, by catalyzing a one-codon backward translocation of tRNAs on improperly translocated ribosomes. Back-translocation proceeds from a post-translocation (POST) complex to a pre-translocation (PRE) complex, thus giving elongation factor G a second chance to translocate the tRNAs correctly. Binds to ribosomes in a GTP-dependent manner.</text>
</comment>
<comment type="catalytic activity">
    <reaction evidence="1">
        <text>GTP + H2O = GDP + phosphate + H(+)</text>
        <dbReference type="Rhea" id="RHEA:19669"/>
        <dbReference type="ChEBI" id="CHEBI:15377"/>
        <dbReference type="ChEBI" id="CHEBI:15378"/>
        <dbReference type="ChEBI" id="CHEBI:37565"/>
        <dbReference type="ChEBI" id="CHEBI:43474"/>
        <dbReference type="ChEBI" id="CHEBI:58189"/>
        <dbReference type="EC" id="3.6.5.n1"/>
    </reaction>
</comment>
<comment type="subcellular location">
    <subcellularLocation>
        <location evidence="1">Cell inner membrane</location>
        <topology evidence="1">Peripheral membrane protein</topology>
        <orientation evidence="1">Cytoplasmic side</orientation>
    </subcellularLocation>
</comment>
<comment type="similarity">
    <text evidence="1">Belongs to the TRAFAC class translation factor GTPase superfamily. Classic translation factor GTPase family. LepA subfamily.</text>
</comment>
<dbReference type="EC" id="3.6.5.n1" evidence="1"/>
<dbReference type="EMBL" id="CP000057">
    <property type="protein sequence ID" value="AAX87019.1"/>
    <property type="molecule type" value="Genomic_DNA"/>
</dbReference>
<dbReference type="RefSeq" id="WP_005652644.1">
    <property type="nucleotide sequence ID" value="NC_007146.2"/>
</dbReference>
<dbReference type="SMR" id="Q4QPM8"/>
<dbReference type="KEGG" id="hit:NTHI0021"/>
<dbReference type="HOGENOM" id="CLU_009995_3_3_6"/>
<dbReference type="Proteomes" id="UP000002525">
    <property type="component" value="Chromosome"/>
</dbReference>
<dbReference type="GO" id="GO:0005886">
    <property type="term" value="C:plasma membrane"/>
    <property type="evidence" value="ECO:0007669"/>
    <property type="project" value="UniProtKB-SubCell"/>
</dbReference>
<dbReference type="GO" id="GO:0005525">
    <property type="term" value="F:GTP binding"/>
    <property type="evidence" value="ECO:0007669"/>
    <property type="project" value="UniProtKB-UniRule"/>
</dbReference>
<dbReference type="GO" id="GO:0003924">
    <property type="term" value="F:GTPase activity"/>
    <property type="evidence" value="ECO:0007669"/>
    <property type="project" value="UniProtKB-UniRule"/>
</dbReference>
<dbReference type="GO" id="GO:0097216">
    <property type="term" value="F:guanosine tetraphosphate binding"/>
    <property type="evidence" value="ECO:0007669"/>
    <property type="project" value="UniProtKB-ARBA"/>
</dbReference>
<dbReference type="GO" id="GO:0043022">
    <property type="term" value="F:ribosome binding"/>
    <property type="evidence" value="ECO:0007669"/>
    <property type="project" value="UniProtKB-UniRule"/>
</dbReference>
<dbReference type="GO" id="GO:0003746">
    <property type="term" value="F:translation elongation factor activity"/>
    <property type="evidence" value="ECO:0007669"/>
    <property type="project" value="UniProtKB-UniRule"/>
</dbReference>
<dbReference type="GO" id="GO:0045727">
    <property type="term" value="P:positive regulation of translation"/>
    <property type="evidence" value="ECO:0007669"/>
    <property type="project" value="UniProtKB-UniRule"/>
</dbReference>
<dbReference type="CDD" id="cd03699">
    <property type="entry name" value="EF4_II"/>
    <property type="match status" value="1"/>
</dbReference>
<dbReference type="CDD" id="cd16260">
    <property type="entry name" value="EF4_III"/>
    <property type="match status" value="1"/>
</dbReference>
<dbReference type="CDD" id="cd01890">
    <property type="entry name" value="LepA"/>
    <property type="match status" value="1"/>
</dbReference>
<dbReference type="CDD" id="cd03709">
    <property type="entry name" value="lepA_C"/>
    <property type="match status" value="1"/>
</dbReference>
<dbReference type="FunFam" id="3.30.70.240:FF:000005">
    <property type="entry name" value="Elongation factor 4"/>
    <property type="match status" value="1"/>
</dbReference>
<dbReference type="FunFam" id="3.40.50.300:FF:000078">
    <property type="entry name" value="Elongation factor 4"/>
    <property type="match status" value="1"/>
</dbReference>
<dbReference type="FunFam" id="2.40.30.10:FF:000015">
    <property type="entry name" value="Translation factor GUF1, mitochondrial"/>
    <property type="match status" value="1"/>
</dbReference>
<dbReference type="FunFam" id="3.30.70.2570:FF:000001">
    <property type="entry name" value="Translation factor GUF1, mitochondrial"/>
    <property type="match status" value="1"/>
</dbReference>
<dbReference type="FunFam" id="3.30.70.870:FF:000004">
    <property type="entry name" value="Translation factor GUF1, mitochondrial"/>
    <property type="match status" value="1"/>
</dbReference>
<dbReference type="Gene3D" id="3.30.70.240">
    <property type="match status" value="1"/>
</dbReference>
<dbReference type="Gene3D" id="3.30.70.2570">
    <property type="entry name" value="Elongation factor 4, C-terminal domain"/>
    <property type="match status" value="1"/>
</dbReference>
<dbReference type="Gene3D" id="3.30.70.870">
    <property type="entry name" value="Elongation Factor G (Translational Gtpase), domain 3"/>
    <property type="match status" value="1"/>
</dbReference>
<dbReference type="Gene3D" id="3.40.50.300">
    <property type="entry name" value="P-loop containing nucleotide triphosphate hydrolases"/>
    <property type="match status" value="1"/>
</dbReference>
<dbReference type="Gene3D" id="2.40.30.10">
    <property type="entry name" value="Translation factors"/>
    <property type="match status" value="1"/>
</dbReference>
<dbReference type="HAMAP" id="MF_00071">
    <property type="entry name" value="LepA"/>
    <property type="match status" value="1"/>
</dbReference>
<dbReference type="InterPro" id="IPR006297">
    <property type="entry name" value="EF-4"/>
</dbReference>
<dbReference type="InterPro" id="IPR035647">
    <property type="entry name" value="EFG_III/V"/>
</dbReference>
<dbReference type="InterPro" id="IPR000640">
    <property type="entry name" value="EFG_V-like"/>
</dbReference>
<dbReference type="InterPro" id="IPR004161">
    <property type="entry name" value="EFTu-like_2"/>
</dbReference>
<dbReference type="InterPro" id="IPR031157">
    <property type="entry name" value="G_TR_CS"/>
</dbReference>
<dbReference type="InterPro" id="IPR038363">
    <property type="entry name" value="LepA_C_sf"/>
</dbReference>
<dbReference type="InterPro" id="IPR013842">
    <property type="entry name" value="LepA_CTD"/>
</dbReference>
<dbReference type="InterPro" id="IPR035654">
    <property type="entry name" value="LepA_IV"/>
</dbReference>
<dbReference type="InterPro" id="IPR027417">
    <property type="entry name" value="P-loop_NTPase"/>
</dbReference>
<dbReference type="InterPro" id="IPR005225">
    <property type="entry name" value="Small_GTP-bd"/>
</dbReference>
<dbReference type="InterPro" id="IPR000795">
    <property type="entry name" value="T_Tr_GTP-bd_dom"/>
</dbReference>
<dbReference type="NCBIfam" id="TIGR01393">
    <property type="entry name" value="lepA"/>
    <property type="match status" value="1"/>
</dbReference>
<dbReference type="NCBIfam" id="TIGR00231">
    <property type="entry name" value="small_GTP"/>
    <property type="match status" value="1"/>
</dbReference>
<dbReference type="PANTHER" id="PTHR43512:SF4">
    <property type="entry name" value="TRANSLATION FACTOR GUF1 HOMOLOG, CHLOROPLASTIC"/>
    <property type="match status" value="1"/>
</dbReference>
<dbReference type="PANTHER" id="PTHR43512">
    <property type="entry name" value="TRANSLATION FACTOR GUF1-RELATED"/>
    <property type="match status" value="1"/>
</dbReference>
<dbReference type="Pfam" id="PF00679">
    <property type="entry name" value="EFG_C"/>
    <property type="match status" value="1"/>
</dbReference>
<dbReference type="Pfam" id="PF00009">
    <property type="entry name" value="GTP_EFTU"/>
    <property type="match status" value="1"/>
</dbReference>
<dbReference type="Pfam" id="PF03144">
    <property type="entry name" value="GTP_EFTU_D2"/>
    <property type="match status" value="1"/>
</dbReference>
<dbReference type="Pfam" id="PF06421">
    <property type="entry name" value="LepA_C"/>
    <property type="match status" value="1"/>
</dbReference>
<dbReference type="PRINTS" id="PR00315">
    <property type="entry name" value="ELONGATNFCT"/>
</dbReference>
<dbReference type="SUPFAM" id="SSF54980">
    <property type="entry name" value="EF-G C-terminal domain-like"/>
    <property type="match status" value="2"/>
</dbReference>
<dbReference type="SUPFAM" id="SSF52540">
    <property type="entry name" value="P-loop containing nucleoside triphosphate hydrolases"/>
    <property type="match status" value="1"/>
</dbReference>
<dbReference type="PROSITE" id="PS00301">
    <property type="entry name" value="G_TR_1"/>
    <property type="match status" value="1"/>
</dbReference>
<dbReference type="PROSITE" id="PS51722">
    <property type="entry name" value="G_TR_2"/>
    <property type="match status" value="1"/>
</dbReference>
<gene>
    <name evidence="1" type="primary">lepA</name>
    <name type="ordered locus">NTHI0021</name>
</gene>
<organism>
    <name type="scientific">Haemophilus influenzae (strain 86-028NP)</name>
    <dbReference type="NCBI Taxonomy" id="281310"/>
    <lineage>
        <taxon>Bacteria</taxon>
        <taxon>Pseudomonadati</taxon>
        <taxon>Pseudomonadota</taxon>
        <taxon>Gammaproteobacteria</taxon>
        <taxon>Pasteurellales</taxon>
        <taxon>Pasteurellaceae</taxon>
        <taxon>Haemophilus</taxon>
    </lineage>
</organism>
<accession>Q4QPM8</accession>
<sequence>MKNIRNFSIIAHIDHGKSTLSDRLIQTCGGLSDREMEAQVLDSMDLERERGITIKAQSVTLNYKAKDGETYQLNFIDTPGHVDFSYEVSRSLAACEGALLVVDAGQGVEAQTLANCYTAIEMDLEVVPILNKIDLPAADPERVAEEIEDIVGIDAMEAVRCSAKTGVGIEDVLEEIVAKIPAPEGDPNAPLQALIIDSWFDNYLGVVSLVRIKNGVLRKGDKIKVMSTGQTYNVDRLGIFTPKQEDTTVLECGEVGWVVCAIKDILGAPVGDTLTHQHNSATEVLPGFKKVKPQVYAGLFPVSSDDYEAFRDALGKLSLNDASLFYEPETSTALGFGFRCGFLGLLHMEIIQERLEREYDLDLITTAPTVIYEVQLTNGEVVYVDSPAKLPPLNNIAEIREPIAECNMLVPQEYLGNVITLCVEKRGVQTNMVYHGNQIALTYEIPMGEVVLDFFDRLKSTSRGYASLDYGFKRFQAADMVRVDIMINSERVDALALIVHKDNSQYRGRELVEKMRELIPRQQFDIAIQAAIGNHIIARSTVKQLRKNVLAKCYGGDVSRKKKLLQKQKEGKKRMKSLGNVEVPQEAFLAILHVGKDK</sequence>